<reference key="1">
    <citation type="journal article" date="1990" name="Mol. Microbiol.">
        <title>The bex locus in encapsulated Haemophilus influenzae: a chromosomal region involved in capsule polysaccharide export.</title>
        <authorList>
            <person name="Kroll J.S."/>
            <person name="Loynds B."/>
            <person name="Brophy L.N."/>
            <person name="Moxon E.R."/>
        </authorList>
    </citation>
    <scope>NUCLEOTIDE SEQUENCE [GENOMIC DNA]</scope>
    <source>
        <strain>Eagan / Serotype B</strain>
    </source>
</reference>
<dbReference type="EMBL" id="X54987">
    <property type="protein sequence ID" value="CAA38731.1"/>
    <property type="molecule type" value="Genomic_DNA"/>
</dbReference>
<dbReference type="EMBL" id="X54987">
    <property type="protein sequence ID" value="CAA38732.1"/>
    <property type="status" value="ALT_INIT"/>
    <property type="molecule type" value="Genomic_DNA"/>
</dbReference>
<dbReference type="PIR" id="S12233">
    <property type="entry name" value="BWHIXC"/>
</dbReference>
<dbReference type="SMR" id="P22930"/>
<dbReference type="GO" id="GO:0009276">
    <property type="term" value="C:Gram-negative-bacterium-type cell wall"/>
    <property type="evidence" value="ECO:0007669"/>
    <property type="project" value="InterPro"/>
</dbReference>
<dbReference type="GO" id="GO:0005886">
    <property type="term" value="C:plasma membrane"/>
    <property type="evidence" value="ECO:0007669"/>
    <property type="project" value="UniProtKB-SubCell"/>
</dbReference>
<dbReference type="GO" id="GO:0005351">
    <property type="term" value="F:carbohydrate:proton symporter activity"/>
    <property type="evidence" value="ECO:0007669"/>
    <property type="project" value="InterPro"/>
</dbReference>
<dbReference type="GO" id="GO:0004713">
    <property type="term" value="F:protein tyrosine kinase activity"/>
    <property type="evidence" value="ECO:0007669"/>
    <property type="project" value="TreeGrafter"/>
</dbReference>
<dbReference type="GO" id="GO:0015774">
    <property type="term" value="P:polysaccharide transport"/>
    <property type="evidence" value="ECO:0007669"/>
    <property type="project" value="UniProtKB-KW"/>
</dbReference>
<dbReference type="InterPro" id="IPR050445">
    <property type="entry name" value="Bact_polysacc_biosynth/exp"/>
</dbReference>
<dbReference type="InterPro" id="IPR005705">
    <property type="entry name" value="BexC_CtrB_KpsE_VexD"/>
</dbReference>
<dbReference type="NCBIfam" id="TIGR01010">
    <property type="entry name" value="BexC_CtrB_KpsE"/>
    <property type="match status" value="1"/>
</dbReference>
<dbReference type="PANTHER" id="PTHR32309:SF13">
    <property type="entry name" value="FERRIC ENTEROBACTIN TRANSPORT PROTEIN FEPE"/>
    <property type="match status" value="1"/>
</dbReference>
<dbReference type="PANTHER" id="PTHR32309">
    <property type="entry name" value="TYROSINE-PROTEIN KINASE"/>
    <property type="match status" value="1"/>
</dbReference>
<comment type="function">
    <text>May form an ATP-driven capsule polysaccharide export apparatus, in association with the BexA, BexB and BexD proteins.</text>
</comment>
<comment type="subcellular location">
    <subcellularLocation>
        <location evidence="2">Cell inner membrane</location>
        <topology evidence="2">Multi-pass membrane protein</topology>
    </subcellularLocation>
</comment>
<comment type="similarity">
    <text evidence="2">Belongs to the BexC/CtrB/KpsE family.</text>
</comment>
<comment type="caution">
    <text evidence="2">It is uncertain whether Met-1 or Met-20 is the initiator.</text>
</comment>
<comment type="sequence caution" evidence="2">
    <conflict type="erroneous initiation">
        <sequence resource="EMBL-CDS" id="CAA38732"/>
    </conflict>
</comment>
<feature type="chain" id="PRO_0000064912" description="Capsule polysaccharide export inner-membrane protein BexC">
    <location>
        <begin position="1"/>
        <end position="377"/>
    </location>
</feature>
<feature type="transmembrane region" description="Helical" evidence="1">
    <location>
        <begin position="23"/>
        <end position="43"/>
    </location>
</feature>
<feature type="transmembrane region" description="Helical" evidence="1">
    <location>
        <begin position="351"/>
        <end position="371"/>
    </location>
</feature>
<accession>P22930</accession>
<gene>
    <name type="primary">bexC</name>
</gene>
<protein>
    <recommendedName>
        <fullName>Capsule polysaccharide export inner-membrane protein BexC</fullName>
    </recommendedName>
</protein>
<evidence type="ECO:0000255" key="1"/>
<evidence type="ECO:0000305" key="2"/>
<keyword id="KW-0972">Capsule biogenesis/degradation</keyword>
<keyword id="KW-0997">Cell inner membrane</keyword>
<keyword id="KW-1003">Cell membrane</keyword>
<keyword id="KW-0472">Membrane</keyword>
<keyword id="KW-0625">Polysaccharide transport</keyword>
<keyword id="KW-0762">Sugar transport</keyword>
<keyword id="KW-0812">Transmembrane</keyword>
<keyword id="KW-1133">Transmembrane helix</keyword>
<keyword id="KW-0813">Transport</keyword>
<name>BEXC_HAEIF</name>
<sequence>MTTENAAIPTKKKKSFWKKMKPLFGLTVLIPTAFSAVYFGLFASDIYVSESSFVVRSPRSQSSLSGVGALLQSTGFSRSQDDTYSVQEYMRSRTALSALEQGLPLRTFYSEKGDLLSRFNGFGLNDTQEAFYRYFKERLSVDVDSISGIATLRVHAFDAEEGYQINERLLKEGESLINRLNERARKDTIEFAEQAVKDAEKNVNETAQALSQYRIKNKIFDLPAQSGVQLSLISSLKSELIRVETQLAQLVSITPDNPQVPALQMRQKSLKKEIDEQTRQLSGNGNSAATQTADYQRLMLANELAQQQLAAAMTSLQNTRGEADRQQLYLEVISQPSKPDWALEPSRIYNIIATFIIGLMLYGVLNLLIASIREHKN</sequence>
<proteinExistence type="inferred from homology"/>
<organism>
    <name type="scientific">Haemophilus influenzae</name>
    <dbReference type="NCBI Taxonomy" id="727"/>
    <lineage>
        <taxon>Bacteria</taxon>
        <taxon>Pseudomonadati</taxon>
        <taxon>Pseudomonadota</taxon>
        <taxon>Gammaproteobacteria</taxon>
        <taxon>Pasteurellales</taxon>
        <taxon>Pasteurellaceae</taxon>
        <taxon>Haemophilus</taxon>
    </lineage>
</organism>